<feature type="chain" id="PRO_1000076452" description="Phosphoribosylaminoimidazole-succinocarboxamide synthase">
    <location>
        <begin position="1"/>
        <end position="253"/>
    </location>
</feature>
<protein>
    <recommendedName>
        <fullName evidence="1">Phosphoribosylaminoimidazole-succinocarboxamide synthase</fullName>
        <ecNumber evidence="1">6.3.2.6</ecNumber>
    </recommendedName>
    <alternativeName>
        <fullName evidence="1">SAICAR synthetase</fullName>
    </alternativeName>
</protein>
<accession>A8LSK4</accession>
<dbReference type="EC" id="6.3.2.6" evidence="1"/>
<dbReference type="EMBL" id="CP000830">
    <property type="protein sequence ID" value="ABV92818.1"/>
    <property type="molecule type" value="Genomic_DNA"/>
</dbReference>
<dbReference type="RefSeq" id="WP_012177749.1">
    <property type="nucleotide sequence ID" value="NC_009952.1"/>
</dbReference>
<dbReference type="SMR" id="A8LSK4"/>
<dbReference type="STRING" id="398580.Dshi_1076"/>
<dbReference type="KEGG" id="dsh:Dshi_1076"/>
<dbReference type="eggNOG" id="COG0152">
    <property type="taxonomic scope" value="Bacteria"/>
</dbReference>
<dbReference type="HOGENOM" id="CLU_061495_2_0_5"/>
<dbReference type="OrthoDB" id="9801549at2"/>
<dbReference type="UniPathway" id="UPA00074">
    <property type="reaction ID" value="UER00131"/>
</dbReference>
<dbReference type="Proteomes" id="UP000006833">
    <property type="component" value="Chromosome"/>
</dbReference>
<dbReference type="GO" id="GO:0005829">
    <property type="term" value="C:cytosol"/>
    <property type="evidence" value="ECO:0007669"/>
    <property type="project" value="TreeGrafter"/>
</dbReference>
<dbReference type="GO" id="GO:0005524">
    <property type="term" value="F:ATP binding"/>
    <property type="evidence" value="ECO:0007669"/>
    <property type="project" value="UniProtKB-KW"/>
</dbReference>
<dbReference type="GO" id="GO:0004639">
    <property type="term" value="F:phosphoribosylaminoimidazolesuccinocarboxamide synthase activity"/>
    <property type="evidence" value="ECO:0007669"/>
    <property type="project" value="UniProtKB-UniRule"/>
</dbReference>
<dbReference type="GO" id="GO:0006189">
    <property type="term" value="P:'de novo' IMP biosynthetic process"/>
    <property type="evidence" value="ECO:0007669"/>
    <property type="project" value="UniProtKB-UniRule"/>
</dbReference>
<dbReference type="GO" id="GO:0009236">
    <property type="term" value="P:cobalamin biosynthetic process"/>
    <property type="evidence" value="ECO:0007669"/>
    <property type="project" value="InterPro"/>
</dbReference>
<dbReference type="CDD" id="cd01415">
    <property type="entry name" value="SAICAR_synt_PurC"/>
    <property type="match status" value="1"/>
</dbReference>
<dbReference type="FunFam" id="3.30.470.20:FF:000006">
    <property type="entry name" value="Phosphoribosylaminoimidazole-succinocarboxamide synthase"/>
    <property type="match status" value="1"/>
</dbReference>
<dbReference type="Gene3D" id="3.30.470.20">
    <property type="entry name" value="ATP-grasp fold, B domain"/>
    <property type="match status" value="1"/>
</dbReference>
<dbReference type="Gene3D" id="3.30.200.20">
    <property type="entry name" value="Phosphorylase Kinase, domain 1"/>
    <property type="match status" value="1"/>
</dbReference>
<dbReference type="HAMAP" id="MF_00137">
    <property type="entry name" value="SAICAR_synth"/>
    <property type="match status" value="1"/>
</dbReference>
<dbReference type="InterPro" id="IPR028923">
    <property type="entry name" value="SAICAR_synt/ADE2_N"/>
</dbReference>
<dbReference type="InterPro" id="IPR033934">
    <property type="entry name" value="SAICAR_synt_PurC"/>
</dbReference>
<dbReference type="InterPro" id="IPR001636">
    <property type="entry name" value="SAICAR_synth"/>
</dbReference>
<dbReference type="InterPro" id="IPR050089">
    <property type="entry name" value="SAICAR_synthetase"/>
</dbReference>
<dbReference type="InterPro" id="IPR018236">
    <property type="entry name" value="SAICAR_synthetase_CS"/>
</dbReference>
<dbReference type="NCBIfam" id="TIGR00081">
    <property type="entry name" value="purC"/>
    <property type="match status" value="1"/>
</dbReference>
<dbReference type="PANTHER" id="PTHR43599">
    <property type="entry name" value="MULTIFUNCTIONAL PROTEIN ADE2"/>
    <property type="match status" value="1"/>
</dbReference>
<dbReference type="PANTHER" id="PTHR43599:SF3">
    <property type="entry name" value="SI:DKEY-6E2.2"/>
    <property type="match status" value="1"/>
</dbReference>
<dbReference type="Pfam" id="PF01259">
    <property type="entry name" value="SAICAR_synt"/>
    <property type="match status" value="1"/>
</dbReference>
<dbReference type="SUPFAM" id="SSF56104">
    <property type="entry name" value="SAICAR synthase-like"/>
    <property type="match status" value="1"/>
</dbReference>
<dbReference type="PROSITE" id="PS01057">
    <property type="entry name" value="SAICAR_SYNTHETASE_1"/>
    <property type="match status" value="1"/>
</dbReference>
<proteinExistence type="inferred from homology"/>
<name>PUR7_DINSH</name>
<organism>
    <name type="scientific">Dinoroseobacter shibae (strain DSM 16493 / NCIMB 14021 / DFL 12)</name>
    <dbReference type="NCBI Taxonomy" id="398580"/>
    <lineage>
        <taxon>Bacteria</taxon>
        <taxon>Pseudomonadati</taxon>
        <taxon>Pseudomonadota</taxon>
        <taxon>Alphaproteobacteria</taxon>
        <taxon>Rhodobacterales</taxon>
        <taxon>Roseobacteraceae</taxon>
        <taxon>Dinoroseobacter</taxon>
    </lineage>
</organism>
<gene>
    <name evidence="1" type="primary">purC</name>
    <name type="ordered locus">Dshi_1076</name>
</gene>
<evidence type="ECO:0000255" key="1">
    <source>
        <dbReference type="HAMAP-Rule" id="MF_00137"/>
    </source>
</evidence>
<sequence>MARRKKIYEGKAKILYEGPEPGTIVQYFKDDATAFNAEKRATIDGKGVLNNRLSEFFMTGLNGIGVPTHFIKRLNMREQLVRAVEIIPIEIVVRNTAAGSISKRLGIPEGTALPRPIVEFYYKDDDLGDPIVSEEHIIAFQWASQQDLDDMVALALRVNDFMSGVMLSVGIKLVDFKIEVGRVFEGDYQRLIVADEISPDSCRLWDIKTGEKLDKDVFRRDLGNLADAYTEVAQRLGVLPKNATPMTKPTLIN</sequence>
<reference key="1">
    <citation type="journal article" date="2010" name="ISME J.">
        <title>The complete genome sequence of the algal symbiont Dinoroseobacter shibae: a hitchhiker's guide to life in the sea.</title>
        <authorList>
            <person name="Wagner-Dobler I."/>
            <person name="Ballhausen B."/>
            <person name="Berger M."/>
            <person name="Brinkhoff T."/>
            <person name="Buchholz I."/>
            <person name="Bunk B."/>
            <person name="Cypionka H."/>
            <person name="Daniel R."/>
            <person name="Drepper T."/>
            <person name="Gerdts G."/>
            <person name="Hahnke S."/>
            <person name="Han C."/>
            <person name="Jahn D."/>
            <person name="Kalhoefer D."/>
            <person name="Kiss H."/>
            <person name="Klenk H.P."/>
            <person name="Kyrpides N."/>
            <person name="Liebl W."/>
            <person name="Liesegang H."/>
            <person name="Meincke L."/>
            <person name="Pati A."/>
            <person name="Petersen J."/>
            <person name="Piekarski T."/>
            <person name="Pommerenke C."/>
            <person name="Pradella S."/>
            <person name="Pukall R."/>
            <person name="Rabus R."/>
            <person name="Stackebrandt E."/>
            <person name="Thole S."/>
            <person name="Thompson L."/>
            <person name="Tielen P."/>
            <person name="Tomasch J."/>
            <person name="von Jan M."/>
            <person name="Wanphrut N."/>
            <person name="Wichels A."/>
            <person name="Zech H."/>
            <person name="Simon M."/>
        </authorList>
    </citation>
    <scope>NUCLEOTIDE SEQUENCE [LARGE SCALE GENOMIC DNA]</scope>
    <source>
        <strain>DSM 16493 / NCIMB 14021 / DFL 12</strain>
    </source>
</reference>
<keyword id="KW-0067">ATP-binding</keyword>
<keyword id="KW-0436">Ligase</keyword>
<keyword id="KW-0547">Nucleotide-binding</keyword>
<keyword id="KW-0658">Purine biosynthesis</keyword>
<keyword id="KW-1185">Reference proteome</keyword>
<comment type="catalytic activity">
    <reaction evidence="1">
        <text>5-amino-1-(5-phospho-D-ribosyl)imidazole-4-carboxylate + L-aspartate + ATP = (2S)-2-[5-amino-1-(5-phospho-beta-D-ribosyl)imidazole-4-carboxamido]succinate + ADP + phosphate + 2 H(+)</text>
        <dbReference type="Rhea" id="RHEA:22628"/>
        <dbReference type="ChEBI" id="CHEBI:15378"/>
        <dbReference type="ChEBI" id="CHEBI:29991"/>
        <dbReference type="ChEBI" id="CHEBI:30616"/>
        <dbReference type="ChEBI" id="CHEBI:43474"/>
        <dbReference type="ChEBI" id="CHEBI:58443"/>
        <dbReference type="ChEBI" id="CHEBI:77657"/>
        <dbReference type="ChEBI" id="CHEBI:456216"/>
        <dbReference type="EC" id="6.3.2.6"/>
    </reaction>
</comment>
<comment type="pathway">
    <text evidence="1">Purine metabolism; IMP biosynthesis via de novo pathway; 5-amino-1-(5-phospho-D-ribosyl)imidazole-4-carboxamide from 5-amino-1-(5-phospho-D-ribosyl)imidazole-4-carboxylate: step 1/2.</text>
</comment>
<comment type="similarity">
    <text evidence="1">Belongs to the SAICAR synthetase family.</text>
</comment>